<dbReference type="EC" id="2.7.7.56" evidence="1"/>
<dbReference type="EMBL" id="CP000103">
    <property type="protein sequence ID" value="ABB73375.1"/>
    <property type="molecule type" value="Genomic_DNA"/>
</dbReference>
<dbReference type="RefSeq" id="WP_011379430.1">
    <property type="nucleotide sequence ID" value="NC_007614.1"/>
</dbReference>
<dbReference type="SMR" id="Q2YCZ6"/>
<dbReference type="STRING" id="323848.Nmul_A0066"/>
<dbReference type="KEGG" id="nmu:Nmul_A0066"/>
<dbReference type="eggNOG" id="COG0689">
    <property type="taxonomic scope" value="Bacteria"/>
</dbReference>
<dbReference type="HOGENOM" id="CLU_050858_0_0_4"/>
<dbReference type="OrthoDB" id="9802265at2"/>
<dbReference type="Proteomes" id="UP000002718">
    <property type="component" value="Chromosome"/>
</dbReference>
<dbReference type="GO" id="GO:0000175">
    <property type="term" value="F:3'-5'-RNA exonuclease activity"/>
    <property type="evidence" value="ECO:0007669"/>
    <property type="project" value="UniProtKB-UniRule"/>
</dbReference>
<dbReference type="GO" id="GO:0000049">
    <property type="term" value="F:tRNA binding"/>
    <property type="evidence" value="ECO:0007669"/>
    <property type="project" value="UniProtKB-UniRule"/>
</dbReference>
<dbReference type="GO" id="GO:0009022">
    <property type="term" value="F:tRNA nucleotidyltransferase activity"/>
    <property type="evidence" value="ECO:0007669"/>
    <property type="project" value="UniProtKB-UniRule"/>
</dbReference>
<dbReference type="GO" id="GO:0016075">
    <property type="term" value="P:rRNA catabolic process"/>
    <property type="evidence" value="ECO:0007669"/>
    <property type="project" value="UniProtKB-UniRule"/>
</dbReference>
<dbReference type="GO" id="GO:0006364">
    <property type="term" value="P:rRNA processing"/>
    <property type="evidence" value="ECO:0007669"/>
    <property type="project" value="UniProtKB-KW"/>
</dbReference>
<dbReference type="GO" id="GO:0008033">
    <property type="term" value="P:tRNA processing"/>
    <property type="evidence" value="ECO:0007669"/>
    <property type="project" value="UniProtKB-UniRule"/>
</dbReference>
<dbReference type="CDD" id="cd11362">
    <property type="entry name" value="RNase_PH_bact"/>
    <property type="match status" value="1"/>
</dbReference>
<dbReference type="FunFam" id="3.30.230.70:FF:000003">
    <property type="entry name" value="Ribonuclease PH"/>
    <property type="match status" value="1"/>
</dbReference>
<dbReference type="Gene3D" id="3.30.230.70">
    <property type="entry name" value="GHMP Kinase, N-terminal domain"/>
    <property type="match status" value="1"/>
</dbReference>
<dbReference type="HAMAP" id="MF_00564">
    <property type="entry name" value="RNase_PH"/>
    <property type="match status" value="1"/>
</dbReference>
<dbReference type="InterPro" id="IPR001247">
    <property type="entry name" value="ExoRNase_PH_dom1"/>
</dbReference>
<dbReference type="InterPro" id="IPR015847">
    <property type="entry name" value="ExoRNase_PH_dom2"/>
</dbReference>
<dbReference type="InterPro" id="IPR036345">
    <property type="entry name" value="ExoRNase_PH_dom2_sf"/>
</dbReference>
<dbReference type="InterPro" id="IPR027408">
    <property type="entry name" value="PNPase/RNase_PH_dom_sf"/>
</dbReference>
<dbReference type="InterPro" id="IPR020568">
    <property type="entry name" value="Ribosomal_Su5_D2-typ_SF"/>
</dbReference>
<dbReference type="InterPro" id="IPR050080">
    <property type="entry name" value="RNase_PH"/>
</dbReference>
<dbReference type="InterPro" id="IPR002381">
    <property type="entry name" value="RNase_PH_bac-type"/>
</dbReference>
<dbReference type="InterPro" id="IPR018336">
    <property type="entry name" value="RNase_PH_CS"/>
</dbReference>
<dbReference type="NCBIfam" id="TIGR01966">
    <property type="entry name" value="RNasePH"/>
    <property type="match status" value="1"/>
</dbReference>
<dbReference type="PANTHER" id="PTHR11953">
    <property type="entry name" value="EXOSOME COMPLEX COMPONENT"/>
    <property type="match status" value="1"/>
</dbReference>
<dbReference type="PANTHER" id="PTHR11953:SF0">
    <property type="entry name" value="EXOSOME COMPLEX COMPONENT RRP41"/>
    <property type="match status" value="1"/>
</dbReference>
<dbReference type="Pfam" id="PF01138">
    <property type="entry name" value="RNase_PH"/>
    <property type="match status" value="1"/>
</dbReference>
<dbReference type="Pfam" id="PF03725">
    <property type="entry name" value="RNase_PH_C"/>
    <property type="match status" value="1"/>
</dbReference>
<dbReference type="SUPFAM" id="SSF55666">
    <property type="entry name" value="Ribonuclease PH domain 2-like"/>
    <property type="match status" value="1"/>
</dbReference>
<dbReference type="SUPFAM" id="SSF54211">
    <property type="entry name" value="Ribosomal protein S5 domain 2-like"/>
    <property type="match status" value="1"/>
</dbReference>
<dbReference type="PROSITE" id="PS01277">
    <property type="entry name" value="RIBONUCLEASE_PH"/>
    <property type="match status" value="1"/>
</dbReference>
<gene>
    <name evidence="1" type="primary">rph</name>
    <name type="ordered locus">Nmul_A0066</name>
</gene>
<name>RNPH_NITMU</name>
<protein>
    <recommendedName>
        <fullName evidence="1">Ribonuclease PH</fullName>
        <shortName evidence="1">RNase PH</shortName>
        <ecNumber evidence="1">2.7.7.56</ecNumber>
    </recommendedName>
    <alternativeName>
        <fullName evidence="1">tRNA nucleotidyltransferase</fullName>
    </alternativeName>
</protein>
<proteinExistence type="inferred from homology"/>
<keyword id="KW-0548">Nucleotidyltransferase</keyword>
<keyword id="KW-1185">Reference proteome</keyword>
<keyword id="KW-0694">RNA-binding</keyword>
<keyword id="KW-0698">rRNA processing</keyword>
<keyword id="KW-0808">Transferase</keyword>
<keyword id="KW-0819">tRNA processing</keyword>
<keyword id="KW-0820">tRNA-binding</keyword>
<accession>Q2YCZ6</accession>
<organism>
    <name type="scientific">Nitrosospira multiformis (strain ATCC 25196 / NCIMB 11849 / C 71)</name>
    <dbReference type="NCBI Taxonomy" id="323848"/>
    <lineage>
        <taxon>Bacteria</taxon>
        <taxon>Pseudomonadati</taxon>
        <taxon>Pseudomonadota</taxon>
        <taxon>Betaproteobacteria</taxon>
        <taxon>Nitrosomonadales</taxon>
        <taxon>Nitrosomonadaceae</taxon>
        <taxon>Nitrosospira</taxon>
    </lineage>
</organism>
<comment type="function">
    <text evidence="1">Phosphorolytic 3'-5' exoribonuclease that plays an important role in tRNA 3'-end maturation. Removes nucleotide residues following the 3'-CCA terminus of tRNAs; can also add nucleotides to the ends of RNA molecules by using nucleoside diphosphates as substrates, but this may not be physiologically important. Probably plays a role in initiation of 16S rRNA degradation (leading to ribosome degradation) during starvation.</text>
</comment>
<comment type="catalytic activity">
    <reaction evidence="1">
        <text>tRNA(n+1) + phosphate = tRNA(n) + a ribonucleoside 5'-diphosphate</text>
        <dbReference type="Rhea" id="RHEA:10628"/>
        <dbReference type="Rhea" id="RHEA-COMP:17343"/>
        <dbReference type="Rhea" id="RHEA-COMP:17344"/>
        <dbReference type="ChEBI" id="CHEBI:43474"/>
        <dbReference type="ChEBI" id="CHEBI:57930"/>
        <dbReference type="ChEBI" id="CHEBI:173114"/>
        <dbReference type="EC" id="2.7.7.56"/>
    </reaction>
</comment>
<comment type="subunit">
    <text evidence="1">Homohexameric ring arranged as a trimer of dimers.</text>
</comment>
<comment type="similarity">
    <text evidence="1">Belongs to the RNase PH family.</text>
</comment>
<reference key="1">
    <citation type="submission" date="2005-08" db="EMBL/GenBank/DDBJ databases">
        <title>Complete sequence of chromosome 1 of Nitrosospira multiformis ATCC 25196.</title>
        <authorList>
            <person name="Copeland A."/>
            <person name="Lucas S."/>
            <person name="Lapidus A."/>
            <person name="Barry K."/>
            <person name="Detter J.C."/>
            <person name="Glavina T."/>
            <person name="Hammon N."/>
            <person name="Israni S."/>
            <person name="Pitluck S."/>
            <person name="Chain P."/>
            <person name="Malfatti S."/>
            <person name="Shin M."/>
            <person name="Vergez L."/>
            <person name="Schmutz J."/>
            <person name="Larimer F."/>
            <person name="Land M."/>
            <person name="Hauser L."/>
            <person name="Kyrpides N."/>
            <person name="Lykidis A."/>
            <person name="Richardson P."/>
        </authorList>
    </citation>
    <scope>NUCLEOTIDE SEQUENCE [LARGE SCALE GENOMIC DNA]</scope>
    <source>
        <strain>ATCC 25196 / NCIMB 11849 / C 71</strain>
    </source>
</reference>
<feature type="chain" id="PRO_1000061136" description="Ribonuclease PH">
    <location>
        <begin position="1"/>
        <end position="238"/>
    </location>
</feature>
<feature type="binding site" evidence="1">
    <location>
        <position position="86"/>
    </location>
    <ligand>
        <name>phosphate</name>
        <dbReference type="ChEBI" id="CHEBI:43474"/>
        <note>substrate</note>
    </ligand>
</feature>
<feature type="binding site" evidence="1">
    <location>
        <begin position="124"/>
        <end position="126"/>
    </location>
    <ligand>
        <name>phosphate</name>
        <dbReference type="ChEBI" id="CHEBI:43474"/>
        <note>substrate</note>
    </ligand>
</feature>
<evidence type="ECO:0000255" key="1">
    <source>
        <dbReference type="HAMAP-Rule" id="MF_00564"/>
    </source>
</evidence>
<sequence length="238" mass="26261">MRPSKRRPDQLRSVQITRHYTRHAEGSVLIECGDTRIICTASVDEKVPLFLRGKGQGWLTAEYGMLPRSTNERMQREAAKGKQSGRTMEIQRLIGRALRSVMDLTKLGERTIQVDCDVIQADGGTRTASITGAFVAVHDAIGTLLRKQAIEATPITGHVAAVSVGVYEGVPMLDLDYLEDSRCDTDMNIVMTDDLGLVEMQGTAEGMPFSRNDLDMMLDLAQQGIRELIAAQKNALNR</sequence>